<protein>
    <recommendedName>
        <fullName evidence="1">Quinate/shikimate dehydrogenase</fullName>
        <ecNumber evidence="1">1.1.1.282</ecNumber>
    </recommendedName>
    <alternativeName>
        <fullName evidence="1">NAD-dependent shikimate 5-dehydrogenase</fullName>
    </alternativeName>
</protein>
<gene>
    <name evidence="1" type="primary">ydiB</name>
    <name type="ordered locus">SeD_A1984</name>
</gene>
<keyword id="KW-0028">Amino-acid biosynthesis</keyword>
<keyword id="KW-0057">Aromatic amino acid biosynthesis</keyword>
<keyword id="KW-0520">NAD</keyword>
<keyword id="KW-0521">NADP</keyword>
<keyword id="KW-0560">Oxidoreductase</keyword>
<comment type="function">
    <text evidence="1">The actual biological function of YdiB remains unclear, nor is it known whether 3-dehydroshikimate or quinate represents the natural substrate. Catalyzes the reversible NAD-dependent reduction of both 3-dehydroshikimate (DHSA) and 3-dehydroquinate to yield shikimate (SA) and quinate, respectively. It can use both NAD or NADP for catalysis, however it has higher catalytic efficiency with NAD.</text>
</comment>
<comment type="catalytic activity">
    <reaction evidence="1">
        <text>L-quinate + NAD(+) = 3-dehydroquinate + NADH + H(+)</text>
        <dbReference type="Rhea" id="RHEA:22364"/>
        <dbReference type="ChEBI" id="CHEBI:15378"/>
        <dbReference type="ChEBI" id="CHEBI:29751"/>
        <dbReference type="ChEBI" id="CHEBI:32364"/>
        <dbReference type="ChEBI" id="CHEBI:57540"/>
        <dbReference type="ChEBI" id="CHEBI:57945"/>
        <dbReference type="EC" id="1.1.1.282"/>
    </reaction>
</comment>
<comment type="catalytic activity">
    <reaction evidence="1">
        <text>L-quinate + NADP(+) = 3-dehydroquinate + NADPH + H(+)</text>
        <dbReference type="Rhea" id="RHEA:18425"/>
        <dbReference type="ChEBI" id="CHEBI:15378"/>
        <dbReference type="ChEBI" id="CHEBI:29751"/>
        <dbReference type="ChEBI" id="CHEBI:32364"/>
        <dbReference type="ChEBI" id="CHEBI:57783"/>
        <dbReference type="ChEBI" id="CHEBI:58349"/>
        <dbReference type="EC" id="1.1.1.282"/>
    </reaction>
</comment>
<comment type="catalytic activity">
    <reaction evidence="1">
        <text>shikimate + NADP(+) = 3-dehydroshikimate + NADPH + H(+)</text>
        <dbReference type="Rhea" id="RHEA:17737"/>
        <dbReference type="ChEBI" id="CHEBI:15378"/>
        <dbReference type="ChEBI" id="CHEBI:16630"/>
        <dbReference type="ChEBI" id="CHEBI:36208"/>
        <dbReference type="ChEBI" id="CHEBI:57783"/>
        <dbReference type="ChEBI" id="CHEBI:58349"/>
        <dbReference type="EC" id="1.1.1.282"/>
    </reaction>
</comment>
<comment type="catalytic activity">
    <reaction evidence="1">
        <text>shikimate + NAD(+) = 3-dehydroshikimate + NADH + H(+)</text>
        <dbReference type="Rhea" id="RHEA:17741"/>
        <dbReference type="ChEBI" id="CHEBI:15378"/>
        <dbReference type="ChEBI" id="CHEBI:16630"/>
        <dbReference type="ChEBI" id="CHEBI:36208"/>
        <dbReference type="ChEBI" id="CHEBI:57540"/>
        <dbReference type="ChEBI" id="CHEBI:57945"/>
        <dbReference type="EC" id="1.1.1.282"/>
    </reaction>
</comment>
<comment type="pathway">
    <text evidence="1">Metabolic intermediate biosynthesis; chorismate biosynthesis; chorismate from D-erythrose 4-phosphate and phosphoenolpyruvate: step 4/7.</text>
</comment>
<comment type="subunit">
    <text evidence="1">Homodimer.</text>
</comment>
<comment type="similarity">
    <text evidence="1">Belongs to the shikimate dehydrogenase family.</text>
</comment>
<dbReference type="EC" id="1.1.1.282" evidence="1"/>
<dbReference type="EMBL" id="CP001144">
    <property type="protein sequence ID" value="ACH74992.1"/>
    <property type="molecule type" value="Genomic_DNA"/>
</dbReference>
<dbReference type="RefSeq" id="WP_000383488.1">
    <property type="nucleotide sequence ID" value="NC_011205.1"/>
</dbReference>
<dbReference type="SMR" id="B5FJ81"/>
<dbReference type="KEGG" id="sed:SeD_A1984"/>
<dbReference type="HOGENOM" id="CLU_044063_4_4_6"/>
<dbReference type="UniPathway" id="UPA00053">
    <property type="reaction ID" value="UER00087"/>
</dbReference>
<dbReference type="Proteomes" id="UP000008322">
    <property type="component" value="Chromosome"/>
</dbReference>
<dbReference type="GO" id="GO:0030266">
    <property type="term" value="F:quinate 3-dehydrogenase (NAD+) activity"/>
    <property type="evidence" value="ECO:0007669"/>
    <property type="project" value="UniProtKB-UniRule"/>
</dbReference>
<dbReference type="GO" id="GO:0052733">
    <property type="term" value="F:quinate 3-dehydrogenase (NADP+) activity"/>
    <property type="evidence" value="ECO:0007669"/>
    <property type="project" value="InterPro"/>
</dbReference>
<dbReference type="GO" id="GO:0052734">
    <property type="term" value="F:shikimate 3-dehydrogenase (NAD+) activity"/>
    <property type="evidence" value="ECO:0007669"/>
    <property type="project" value="InterPro"/>
</dbReference>
<dbReference type="GO" id="GO:0004764">
    <property type="term" value="F:shikimate 3-dehydrogenase (NADP+) activity"/>
    <property type="evidence" value="ECO:0007669"/>
    <property type="project" value="UniProtKB-UniRule"/>
</dbReference>
<dbReference type="GO" id="GO:0008652">
    <property type="term" value="P:amino acid biosynthetic process"/>
    <property type="evidence" value="ECO:0007669"/>
    <property type="project" value="UniProtKB-KW"/>
</dbReference>
<dbReference type="GO" id="GO:0009073">
    <property type="term" value="P:aromatic amino acid family biosynthetic process"/>
    <property type="evidence" value="ECO:0007669"/>
    <property type="project" value="UniProtKB-KW"/>
</dbReference>
<dbReference type="GO" id="GO:0009423">
    <property type="term" value="P:chorismate biosynthetic process"/>
    <property type="evidence" value="ECO:0007669"/>
    <property type="project" value="UniProtKB-UniRule"/>
</dbReference>
<dbReference type="GO" id="GO:0019632">
    <property type="term" value="P:shikimate metabolic process"/>
    <property type="evidence" value="ECO:0007669"/>
    <property type="project" value="TreeGrafter"/>
</dbReference>
<dbReference type="CDD" id="cd01065">
    <property type="entry name" value="NAD_bind_Shikimate_DH"/>
    <property type="match status" value="1"/>
</dbReference>
<dbReference type="FunFam" id="3.40.50.10860:FF:000004">
    <property type="entry name" value="Quinate/shikimate dehydrogenase"/>
    <property type="match status" value="1"/>
</dbReference>
<dbReference type="FunFam" id="3.40.50.720:FF:000086">
    <property type="entry name" value="Quinate/shikimate dehydrogenase"/>
    <property type="match status" value="1"/>
</dbReference>
<dbReference type="Gene3D" id="3.40.50.10860">
    <property type="entry name" value="Leucine Dehydrogenase, chain A, domain 1"/>
    <property type="match status" value="1"/>
</dbReference>
<dbReference type="Gene3D" id="3.40.50.720">
    <property type="entry name" value="NAD(P)-binding Rossmann-like Domain"/>
    <property type="match status" value="1"/>
</dbReference>
<dbReference type="HAMAP" id="MF_00222">
    <property type="entry name" value="Shikimate_DH_AroE"/>
    <property type="match status" value="1"/>
</dbReference>
<dbReference type="HAMAP" id="MF_01578">
    <property type="entry name" value="Shikimate_DH_YdiB"/>
    <property type="match status" value="1"/>
</dbReference>
<dbReference type="InterPro" id="IPR046346">
    <property type="entry name" value="Aminoacid_DH-like_N_sf"/>
</dbReference>
<dbReference type="InterPro" id="IPR036291">
    <property type="entry name" value="NAD(P)-bd_dom_sf"/>
</dbReference>
<dbReference type="InterPro" id="IPR022872">
    <property type="entry name" value="Quinate/Shikimate_DH"/>
</dbReference>
<dbReference type="InterPro" id="IPR041121">
    <property type="entry name" value="SDH_C"/>
</dbReference>
<dbReference type="InterPro" id="IPR013708">
    <property type="entry name" value="Shikimate_DH-bd_N"/>
</dbReference>
<dbReference type="InterPro" id="IPR022893">
    <property type="entry name" value="Shikimate_DH_fam"/>
</dbReference>
<dbReference type="NCBIfam" id="NF009390">
    <property type="entry name" value="PRK12749.1"/>
    <property type="match status" value="1"/>
</dbReference>
<dbReference type="PANTHER" id="PTHR21089:SF1">
    <property type="entry name" value="BIFUNCTIONAL 3-DEHYDROQUINATE DEHYDRATASE_SHIKIMATE DEHYDROGENASE, CHLOROPLASTIC"/>
    <property type="match status" value="1"/>
</dbReference>
<dbReference type="PANTHER" id="PTHR21089">
    <property type="entry name" value="SHIKIMATE DEHYDROGENASE"/>
    <property type="match status" value="1"/>
</dbReference>
<dbReference type="Pfam" id="PF18317">
    <property type="entry name" value="SDH_C"/>
    <property type="match status" value="1"/>
</dbReference>
<dbReference type="Pfam" id="PF08501">
    <property type="entry name" value="Shikimate_dh_N"/>
    <property type="match status" value="1"/>
</dbReference>
<dbReference type="SUPFAM" id="SSF53223">
    <property type="entry name" value="Aminoacid dehydrogenase-like, N-terminal domain"/>
    <property type="match status" value="1"/>
</dbReference>
<dbReference type="SUPFAM" id="SSF51735">
    <property type="entry name" value="NAD(P)-binding Rossmann-fold domains"/>
    <property type="match status" value="1"/>
</dbReference>
<proteinExistence type="inferred from homology"/>
<evidence type="ECO:0000255" key="1">
    <source>
        <dbReference type="HAMAP-Rule" id="MF_01578"/>
    </source>
</evidence>
<accession>B5FJ81</accession>
<sequence>MDVTAKYELIGLMAYPIRHSLSPEMQNKALEKAGLPYTYMAFEVDNTTFASAIEGLKALKMRGTGVSMPNKQLACEYVDELTPAAKLVGAINTIVNDDGYLRGYNTDGTGHIRAIKESGFDIRGKTMVLLGAGGAATAIGAQAAIEGIKEIKLFNRKDDFFEKAVAFAKRVNENTDCVVTVTDLADQHAFTEALASADILTNGTKVGMKPLENESLIGDVSLLRPELLVTECVYNPHMTKLLQQAQQAGCKTIDGYGMLLWQGAEQFELWTGKAFPLDYVKQVMGFTA</sequence>
<feature type="chain" id="PRO_1000147556" description="Quinate/shikimate dehydrogenase">
    <location>
        <begin position="1"/>
        <end position="288"/>
    </location>
</feature>
<feature type="binding site" evidence="1">
    <location>
        <position position="71"/>
    </location>
    <ligand>
        <name>substrate</name>
    </ligand>
</feature>
<feature type="binding site" evidence="1">
    <location>
        <position position="107"/>
    </location>
    <ligand>
        <name>substrate</name>
    </ligand>
</feature>
<feature type="binding site" evidence="1">
    <location>
        <begin position="132"/>
        <end position="135"/>
    </location>
    <ligand>
        <name>NAD(+)</name>
        <dbReference type="ChEBI" id="CHEBI:57540"/>
    </ligand>
</feature>
<feature type="binding site" evidence="1">
    <location>
        <begin position="155"/>
        <end position="158"/>
    </location>
    <ligand>
        <name>NAD(+)</name>
        <dbReference type="ChEBI" id="CHEBI:57540"/>
    </ligand>
</feature>
<feature type="binding site" evidence="1">
    <location>
        <position position="205"/>
    </location>
    <ligand>
        <name>NAD(+)</name>
        <dbReference type="ChEBI" id="CHEBI:57540"/>
    </ligand>
</feature>
<feature type="binding site" evidence="1">
    <location>
        <begin position="232"/>
        <end position="235"/>
    </location>
    <ligand>
        <name>NAD(+)</name>
        <dbReference type="ChEBI" id="CHEBI:57540"/>
    </ligand>
</feature>
<feature type="binding site" evidence="1">
    <location>
        <position position="255"/>
    </location>
    <ligand>
        <name>NAD(+)</name>
        <dbReference type="ChEBI" id="CHEBI:57540"/>
    </ligand>
</feature>
<name>YDIB_SALDC</name>
<reference key="1">
    <citation type="journal article" date="2011" name="J. Bacteriol.">
        <title>Comparative genomics of 28 Salmonella enterica isolates: evidence for CRISPR-mediated adaptive sublineage evolution.</title>
        <authorList>
            <person name="Fricke W.F."/>
            <person name="Mammel M.K."/>
            <person name="McDermott P.F."/>
            <person name="Tartera C."/>
            <person name="White D.G."/>
            <person name="Leclerc J.E."/>
            <person name="Ravel J."/>
            <person name="Cebula T.A."/>
        </authorList>
    </citation>
    <scope>NUCLEOTIDE SEQUENCE [LARGE SCALE GENOMIC DNA]</scope>
    <source>
        <strain>CT_02021853</strain>
    </source>
</reference>
<organism>
    <name type="scientific">Salmonella dublin (strain CT_02021853)</name>
    <dbReference type="NCBI Taxonomy" id="439851"/>
    <lineage>
        <taxon>Bacteria</taxon>
        <taxon>Pseudomonadati</taxon>
        <taxon>Pseudomonadota</taxon>
        <taxon>Gammaproteobacteria</taxon>
        <taxon>Enterobacterales</taxon>
        <taxon>Enterobacteriaceae</taxon>
        <taxon>Salmonella</taxon>
    </lineage>
</organism>